<reference key="1">
    <citation type="journal article" date="2000" name="Nature">
        <title>DNA sequence of both chromosomes of the cholera pathogen Vibrio cholerae.</title>
        <authorList>
            <person name="Heidelberg J.F."/>
            <person name="Eisen J.A."/>
            <person name="Nelson W.C."/>
            <person name="Clayton R.A."/>
            <person name="Gwinn M.L."/>
            <person name="Dodson R.J."/>
            <person name="Haft D.H."/>
            <person name="Hickey E.K."/>
            <person name="Peterson J.D."/>
            <person name="Umayam L.A."/>
            <person name="Gill S.R."/>
            <person name="Nelson K.E."/>
            <person name="Read T.D."/>
            <person name="Tettelin H."/>
            <person name="Richardson D.L."/>
            <person name="Ermolaeva M.D."/>
            <person name="Vamathevan J.J."/>
            <person name="Bass S."/>
            <person name="Qin H."/>
            <person name="Dragoi I."/>
            <person name="Sellers P."/>
            <person name="McDonald L.A."/>
            <person name="Utterback T.R."/>
            <person name="Fleischmann R.D."/>
            <person name="Nierman W.C."/>
            <person name="White O."/>
            <person name="Salzberg S.L."/>
            <person name="Smith H.O."/>
            <person name="Colwell R.R."/>
            <person name="Mekalanos J.J."/>
            <person name="Venter J.C."/>
            <person name="Fraser C.M."/>
        </authorList>
    </citation>
    <scope>NUCLEOTIDE SEQUENCE [LARGE SCALE GENOMIC DNA]</scope>
    <source>
        <strain>ATCC 39315 / El Tor Inaba N16961</strain>
    </source>
</reference>
<dbReference type="EC" id="1.14.12.17"/>
<dbReference type="EMBL" id="AE003853">
    <property type="protein sequence ID" value="AAF96096.1"/>
    <property type="molecule type" value="Genomic_DNA"/>
</dbReference>
<dbReference type="PIR" id="F82491">
    <property type="entry name" value="F82491"/>
</dbReference>
<dbReference type="RefSeq" id="NP_232583.1">
    <property type="nucleotide sequence ID" value="NC_002506.1"/>
</dbReference>
<dbReference type="PDB" id="4EH1">
    <property type="method" value="X-ray"/>
    <property type="resolution" value="2.20 A"/>
    <property type="chains" value="A/B=152-394"/>
</dbReference>
<dbReference type="PDBsum" id="4EH1"/>
<dbReference type="SMR" id="Q9KMY3"/>
<dbReference type="STRING" id="243277.VC_A0183"/>
<dbReference type="DNASU" id="2611856"/>
<dbReference type="EnsemblBacteria" id="AAF96096">
    <property type="protein sequence ID" value="AAF96096"/>
    <property type="gene ID" value="VC_A0183"/>
</dbReference>
<dbReference type="KEGG" id="vch:VC_A0183"/>
<dbReference type="PATRIC" id="fig|243277.26.peg.2821"/>
<dbReference type="eggNOG" id="COG1017">
    <property type="taxonomic scope" value="Bacteria"/>
</dbReference>
<dbReference type="eggNOG" id="COG1018">
    <property type="taxonomic scope" value="Bacteria"/>
</dbReference>
<dbReference type="HOGENOM" id="CLU_003827_12_0_6"/>
<dbReference type="EvolutionaryTrace" id="Q9KMY3"/>
<dbReference type="Proteomes" id="UP000000584">
    <property type="component" value="Chromosome 2"/>
</dbReference>
<dbReference type="GO" id="GO:0005737">
    <property type="term" value="C:cytoplasm"/>
    <property type="evidence" value="ECO:0000318"/>
    <property type="project" value="GO_Central"/>
</dbReference>
<dbReference type="GO" id="GO:0071949">
    <property type="term" value="F:FAD binding"/>
    <property type="evidence" value="ECO:0000318"/>
    <property type="project" value="GO_Central"/>
</dbReference>
<dbReference type="GO" id="GO:0020037">
    <property type="term" value="F:heme binding"/>
    <property type="evidence" value="ECO:0007669"/>
    <property type="project" value="InterPro"/>
</dbReference>
<dbReference type="GO" id="GO:0046872">
    <property type="term" value="F:metal ion binding"/>
    <property type="evidence" value="ECO:0007669"/>
    <property type="project" value="UniProtKB-KW"/>
</dbReference>
<dbReference type="GO" id="GO:0008941">
    <property type="term" value="F:nitric oxide dioxygenase NAD(P)H activity"/>
    <property type="evidence" value="ECO:0000318"/>
    <property type="project" value="GO_Central"/>
</dbReference>
<dbReference type="GO" id="GO:0019825">
    <property type="term" value="F:oxygen binding"/>
    <property type="evidence" value="ECO:0007669"/>
    <property type="project" value="InterPro"/>
</dbReference>
<dbReference type="GO" id="GO:0005344">
    <property type="term" value="F:oxygen carrier activity"/>
    <property type="evidence" value="ECO:0007669"/>
    <property type="project" value="UniProtKB-UniRule"/>
</dbReference>
<dbReference type="GO" id="GO:0071500">
    <property type="term" value="P:cellular response to nitrosative stress"/>
    <property type="evidence" value="ECO:0000318"/>
    <property type="project" value="GO_Central"/>
</dbReference>
<dbReference type="GO" id="GO:0046210">
    <property type="term" value="P:nitric oxide catabolic process"/>
    <property type="evidence" value="ECO:0000318"/>
    <property type="project" value="GO_Central"/>
</dbReference>
<dbReference type="GO" id="GO:0009636">
    <property type="term" value="P:response to toxic substance"/>
    <property type="evidence" value="ECO:0007669"/>
    <property type="project" value="UniProtKB-KW"/>
</dbReference>
<dbReference type="CDD" id="cd06184">
    <property type="entry name" value="flavohem_like_fad_nad_binding"/>
    <property type="match status" value="1"/>
</dbReference>
<dbReference type="CDD" id="cd14776">
    <property type="entry name" value="HmpEc-globin-like"/>
    <property type="match status" value="1"/>
</dbReference>
<dbReference type="FunFam" id="1.10.490.10:FF:000003">
    <property type="entry name" value="Flavohemoprotein"/>
    <property type="match status" value="1"/>
</dbReference>
<dbReference type="FunFam" id="2.40.30.10:FF:000034">
    <property type="entry name" value="Flavohemoprotein"/>
    <property type="match status" value="1"/>
</dbReference>
<dbReference type="FunFam" id="3.40.50.80:FF:000010">
    <property type="entry name" value="Flavohemoprotein"/>
    <property type="match status" value="1"/>
</dbReference>
<dbReference type="Gene3D" id="1.10.490.10">
    <property type="entry name" value="Globins"/>
    <property type="match status" value="1"/>
</dbReference>
<dbReference type="Gene3D" id="3.40.50.80">
    <property type="entry name" value="Nucleotide-binding domain of ferredoxin-NADP reductase (FNR) module"/>
    <property type="match status" value="1"/>
</dbReference>
<dbReference type="Gene3D" id="2.40.30.10">
    <property type="entry name" value="Translation factors"/>
    <property type="match status" value="1"/>
</dbReference>
<dbReference type="HAMAP" id="MF_01252">
    <property type="entry name" value="Hmp"/>
    <property type="match status" value="1"/>
</dbReference>
<dbReference type="InterPro" id="IPR008333">
    <property type="entry name" value="Cbr1-like_FAD-bd_dom"/>
</dbReference>
<dbReference type="InterPro" id="IPR017927">
    <property type="entry name" value="FAD-bd_FR_type"/>
</dbReference>
<dbReference type="InterPro" id="IPR001709">
    <property type="entry name" value="Flavoprot_Pyr_Nucl_cyt_Rdtase"/>
</dbReference>
<dbReference type="InterPro" id="IPR039261">
    <property type="entry name" value="FNR_nucleotide-bd"/>
</dbReference>
<dbReference type="InterPro" id="IPR000971">
    <property type="entry name" value="Globin"/>
</dbReference>
<dbReference type="InterPro" id="IPR009050">
    <property type="entry name" value="Globin-like_sf"/>
</dbReference>
<dbReference type="InterPro" id="IPR012292">
    <property type="entry name" value="Globin/Proto"/>
</dbReference>
<dbReference type="InterPro" id="IPR023950">
    <property type="entry name" value="Hmp"/>
</dbReference>
<dbReference type="InterPro" id="IPR001433">
    <property type="entry name" value="OxRdtase_FAD/NAD-bd"/>
</dbReference>
<dbReference type="InterPro" id="IPR017938">
    <property type="entry name" value="Riboflavin_synthase-like_b-brl"/>
</dbReference>
<dbReference type="NCBIfam" id="NF009805">
    <property type="entry name" value="PRK13289.1"/>
    <property type="match status" value="1"/>
</dbReference>
<dbReference type="PANTHER" id="PTHR43396">
    <property type="entry name" value="FLAVOHEMOPROTEIN"/>
    <property type="match status" value="1"/>
</dbReference>
<dbReference type="PANTHER" id="PTHR43396:SF3">
    <property type="entry name" value="FLAVOHEMOPROTEIN"/>
    <property type="match status" value="1"/>
</dbReference>
<dbReference type="Pfam" id="PF00970">
    <property type="entry name" value="FAD_binding_6"/>
    <property type="match status" value="1"/>
</dbReference>
<dbReference type="Pfam" id="PF00042">
    <property type="entry name" value="Globin"/>
    <property type="match status" value="1"/>
</dbReference>
<dbReference type="Pfam" id="PF00175">
    <property type="entry name" value="NAD_binding_1"/>
    <property type="match status" value="1"/>
</dbReference>
<dbReference type="PRINTS" id="PR00371">
    <property type="entry name" value="FPNCR"/>
</dbReference>
<dbReference type="PRINTS" id="PR00410">
    <property type="entry name" value="PHEHYDRXLASE"/>
</dbReference>
<dbReference type="SUPFAM" id="SSF52343">
    <property type="entry name" value="Ferredoxin reductase-like, C-terminal NADP-linked domain"/>
    <property type="match status" value="1"/>
</dbReference>
<dbReference type="SUPFAM" id="SSF46458">
    <property type="entry name" value="Globin-like"/>
    <property type="match status" value="1"/>
</dbReference>
<dbReference type="SUPFAM" id="SSF63380">
    <property type="entry name" value="Riboflavin synthase domain-like"/>
    <property type="match status" value="1"/>
</dbReference>
<dbReference type="PROSITE" id="PS51384">
    <property type="entry name" value="FAD_FR"/>
    <property type="match status" value="1"/>
</dbReference>
<dbReference type="PROSITE" id="PS01033">
    <property type="entry name" value="GLOBIN"/>
    <property type="match status" value="1"/>
</dbReference>
<proteinExistence type="evidence at protein level"/>
<gene>
    <name type="primary">hmp</name>
    <name type="ordered locus">VC_A0183</name>
</gene>
<organism>
    <name type="scientific">Vibrio cholerae serotype O1 (strain ATCC 39315 / El Tor Inaba N16961)</name>
    <dbReference type="NCBI Taxonomy" id="243277"/>
    <lineage>
        <taxon>Bacteria</taxon>
        <taxon>Pseudomonadati</taxon>
        <taxon>Pseudomonadota</taxon>
        <taxon>Gammaproteobacteria</taxon>
        <taxon>Vibrionales</taxon>
        <taxon>Vibrionaceae</taxon>
        <taxon>Vibrio</taxon>
    </lineage>
</organism>
<comment type="function">
    <text evidence="1">Is involved in NO detoxification in an aerobic process, termed nitric oxide dioxygenase (NOD) reaction that utilizes O(2) and NAD(P)H to convert NO to nitrate, which protects the bacterium from various noxious nitrogen compounds. Therefore, plays a central role in the inducible response to nitrosative stress (By similarity).</text>
</comment>
<comment type="catalytic activity">
    <reaction>
        <text>2 nitric oxide + NADPH + 2 O2 = 2 nitrate + NADP(+) + H(+)</text>
        <dbReference type="Rhea" id="RHEA:19465"/>
        <dbReference type="ChEBI" id="CHEBI:15378"/>
        <dbReference type="ChEBI" id="CHEBI:15379"/>
        <dbReference type="ChEBI" id="CHEBI:16480"/>
        <dbReference type="ChEBI" id="CHEBI:17632"/>
        <dbReference type="ChEBI" id="CHEBI:57783"/>
        <dbReference type="ChEBI" id="CHEBI:58349"/>
        <dbReference type="EC" id="1.14.12.17"/>
    </reaction>
</comment>
<comment type="catalytic activity">
    <reaction>
        <text>2 nitric oxide + NADH + 2 O2 = 2 nitrate + NAD(+) + H(+)</text>
        <dbReference type="Rhea" id="RHEA:19469"/>
        <dbReference type="ChEBI" id="CHEBI:15378"/>
        <dbReference type="ChEBI" id="CHEBI:15379"/>
        <dbReference type="ChEBI" id="CHEBI:16480"/>
        <dbReference type="ChEBI" id="CHEBI:17632"/>
        <dbReference type="ChEBI" id="CHEBI:57540"/>
        <dbReference type="ChEBI" id="CHEBI:57945"/>
        <dbReference type="EC" id="1.14.12.17"/>
    </reaction>
</comment>
<comment type="cofactor">
    <cofactor evidence="1">
        <name>heme b</name>
        <dbReference type="ChEBI" id="CHEBI:60344"/>
    </cofactor>
    <text evidence="1">Binds 1 heme b (iron(II)-protoporphyrin IX) group per subunit.</text>
</comment>
<comment type="cofactor">
    <cofactor evidence="1">
        <name>FAD</name>
        <dbReference type="ChEBI" id="CHEBI:57692"/>
    </cofactor>
    <text evidence="1">Binds 1 FAD per subunit.</text>
</comment>
<comment type="domain">
    <text>Consists of two distinct domains; an N-terminal heme-containing oxygen-binding domain and a C-terminal reductase domain with binding sites for FAD and NAD(P)H.</text>
</comment>
<comment type="similarity">
    <text evidence="3">Belongs to the globin family. Two-domain flavohemoproteins subfamily.</text>
</comment>
<comment type="similarity">
    <text evidence="3">In the C-terminal section; belongs to the flavoprotein pyridine nucleotide cytochrome reductase family.</text>
</comment>
<evidence type="ECO:0000250" key="1"/>
<evidence type="ECO:0000255" key="2">
    <source>
        <dbReference type="PROSITE-ProRule" id="PRU00238"/>
    </source>
</evidence>
<evidence type="ECO:0000305" key="3"/>
<evidence type="ECO:0007829" key="4">
    <source>
        <dbReference type="PDB" id="4EH1"/>
    </source>
</evidence>
<name>HMP_VIBCH</name>
<protein>
    <recommendedName>
        <fullName>Flavohemoprotein</fullName>
    </recommendedName>
    <alternativeName>
        <fullName>Flavohemoglobin</fullName>
    </alternativeName>
    <alternativeName>
        <fullName>Hemoglobin-like protein</fullName>
    </alternativeName>
    <alternativeName>
        <fullName>Nitric oxide dioxygenase</fullName>
        <shortName>NO oxygenase</shortName>
        <shortName>NOD</shortName>
        <ecNumber>1.14.12.17</ecNumber>
    </alternativeName>
</protein>
<accession>Q9KMY3</accession>
<sequence>MLTQEHINIIKSTIPLLESAGPALTQHFYQRMFSHNPELKHIFNMTHQKTGRQSVALFEAIAAYAKHIDNLAALTSAVERIAHKHTSFNIQPEHYQIVGHHLLETLRELAPDAFTQPVEEAWTAAYFFLAQVFIDREGALYLERKQALGGWRDGRTFVVREKQVESAYVTSFVLVPADGGAVLDYQPGQYIGIEVTPEGSDYREIRQYSLSHASNGREYRISVKREGVGSDNPGLVSHYLHNNVKVGDSVKLYAPAGDFFYVERERPVVLISAGVGATPMQAILHTLAKQNKSGVTYLYACNSAKEHTFAQETAQLIAQQGWMQQVWYRDESADDVLQGEMQLAELILPIEDGDFYLCGPIGFMQYVVKQLLALGVDKARIHYEVFGPHAQLAA</sequence>
<keyword id="KW-0002">3D-structure</keyword>
<keyword id="KW-0216">Detoxification</keyword>
<keyword id="KW-0274">FAD</keyword>
<keyword id="KW-0285">Flavoprotein</keyword>
<keyword id="KW-0349">Heme</keyword>
<keyword id="KW-0408">Iron</keyword>
<keyword id="KW-0479">Metal-binding</keyword>
<keyword id="KW-0520">NAD</keyword>
<keyword id="KW-0521">NADP</keyword>
<keyword id="KW-0560">Oxidoreductase</keyword>
<keyword id="KW-0561">Oxygen transport</keyword>
<keyword id="KW-1185">Reference proteome</keyword>
<keyword id="KW-0813">Transport</keyword>
<feature type="chain" id="PRO_0000052449" description="Flavohemoprotein">
    <location>
        <begin position="1"/>
        <end position="394"/>
    </location>
</feature>
<feature type="domain" description="Globin" evidence="2">
    <location>
        <begin position="1"/>
        <end position="138"/>
    </location>
</feature>
<feature type="domain" description="FAD-binding FR-type">
    <location>
        <begin position="152"/>
        <end position="262"/>
    </location>
</feature>
<feature type="region of interest" description="Reductase">
    <location>
        <begin position="149"/>
        <end position="394"/>
    </location>
</feature>
<feature type="active site" description="Charge relay system" evidence="1">
    <location>
        <position position="95"/>
    </location>
</feature>
<feature type="active site" description="Charge relay system" evidence="1">
    <location>
        <position position="137"/>
    </location>
</feature>
<feature type="binding site" description="proximal binding residue" evidence="1">
    <location>
        <position position="85"/>
    </location>
    <ligand>
        <name>heme b</name>
        <dbReference type="ChEBI" id="CHEBI:60344"/>
    </ligand>
    <ligandPart>
        <name>Fe</name>
        <dbReference type="ChEBI" id="CHEBI:18248"/>
    </ligandPart>
</feature>
<feature type="binding site" evidence="1">
    <location>
        <position position="190"/>
    </location>
    <ligand>
        <name>FAD</name>
        <dbReference type="ChEBI" id="CHEBI:57692"/>
    </ligand>
</feature>
<feature type="binding site" evidence="1">
    <location>
        <begin position="206"/>
        <end position="209"/>
    </location>
    <ligand>
        <name>FAD</name>
        <dbReference type="ChEBI" id="CHEBI:57692"/>
    </ligand>
</feature>
<feature type="binding site" evidence="1">
    <location>
        <begin position="274"/>
        <end position="279"/>
    </location>
    <ligand>
        <name>NADP(+)</name>
        <dbReference type="ChEBI" id="CHEBI:58349"/>
    </ligand>
</feature>
<feature type="binding site" evidence="1">
    <location>
        <begin position="385"/>
        <end position="388"/>
    </location>
    <ligand>
        <name>FAD</name>
        <dbReference type="ChEBI" id="CHEBI:57692"/>
    </ligand>
</feature>
<feature type="site" description="Involved in heme-bound ligand stabilization and O-O bond activation" evidence="1">
    <location>
        <position position="29"/>
    </location>
</feature>
<feature type="site" description="Influences the redox potential of the prosthetic heme and FAD groups" evidence="1">
    <location>
        <position position="84"/>
    </location>
</feature>
<feature type="site" description="Influences the redox potential of the prosthetic heme and FAD groups" evidence="1">
    <location>
        <position position="384"/>
    </location>
</feature>
<feature type="strand" evidence="4">
    <location>
        <begin position="155"/>
        <end position="164"/>
    </location>
</feature>
<feature type="strand" evidence="4">
    <location>
        <begin position="166"/>
        <end position="178"/>
    </location>
</feature>
<feature type="strand" evidence="4">
    <location>
        <begin position="190"/>
        <end position="195"/>
    </location>
</feature>
<feature type="strand" evidence="4">
    <location>
        <begin position="204"/>
        <end position="210"/>
    </location>
</feature>
<feature type="strand" evidence="4">
    <location>
        <begin position="219"/>
        <end position="224"/>
    </location>
</feature>
<feature type="turn" evidence="4">
    <location>
        <begin position="226"/>
        <end position="229"/>
    </location>
</feature>
<feature type="strand" evidence="4">
    <location>
        <begin position="230"/>
        <end position="232"/>
    </location>
</feature>
<feature type="helix" evidence="4">
    <location>
        <begin position="235"/>
        <end position="243"/>
    </location>
</feature>
<feature type="strand" evidence="4">
    <location>
        <begin position="249"/>
        <end position="256"/>
    </location>
</feature>
<feature type="strand" evidence="4">
    <location>
        <begin position="268"/>
        <end position="273"/>
    </location>
</feature>
<feature type="helix" evidence="4">
    <location>
        <begin position="274"/>
        <end position="276"/>
    </location>
</feature>
<feature type="helix" evidence="4">
    <location>
        <begin position="277"/>
        <end position="289"/>
    </location>
</feature>
<feature type="strand" evidence="4">
    <location>
        <begin position="294"/>
        <end position="303"/>
    </location>
</feature>
<feature type="helix" evidence="4">
    <location>
        <begin position="304"/>
        <end position="306"/>
    </location>
</feature>
<feature type="helix" evidence="4">
    <location>
        <begin position="310"/>
        <end position="320"/>
    </location>
</feature>
<feature type="strand" evidence="4">
    <location>
        <begin position="323"/>
        <end position="330"/>
    </location>
</feature>
<feature type="strand" evidence="4">
    <location>
        <begin position="337"/>
        <end position="340"/>
    </location>
</feature>
<feature type="turn" evidence="4">
    <location>
        <begin position="350"/>
        <end position="352"/>
    </location>
</feature>
<feature type="strand" evidence="4">
    <location>
        <begin position="354"/>
        <end position="359"/>
    </location>
</feature>
<feature type="helix" evidence="4">
    <location>
        <begin position="361"/>
        <end position="374"/>
    </location>
</feature>
<feature type="helix" evidence="4">
    <location>
        <begin position="378"/>
        <end position="380"/>
    </location>
</feature>
<feature type="strand" evidence="4">
    <location>
        <begin position="381"/>
        <end position="385"/>
    </location>
</feature>